<protein>
    <recommendedName>
        <fullName evidence="1">Holliday junction branch migration complex subunit RuvA</fullName>
    </recommendedName>
</protein>
<dbReference type="EMBL" id="CP000920">
    <property type="protein sequence ID" value="ACO22204.1"/>
    <property type="molecule type" value="Genomic_DNA"/>
</dbReference>
<dbReference type="RefSeq" id="WP_000271493.1">
    <property type="nucleotide sequence ID" value="NC_012467.1"/>
</dbReference>
<dbReference type="SMR" id="C1CI73"/>
<dbReference type="GeneID" id="45652332"/>
<dbReference type="KEGG" id="spp:SPP_0236"/>
<dbReference type="HOGENOM" id="CLU_087936_1_0_9"/>
<dbReference type="GO" id="GO:0005737">
    <property type="term" value="C:cytoplasm"/>
    <property type="evidence" value="ECO:0007669"/>
    <property type="project" value="UniProtKB-SubCell"/>
</dbReference>
<dbReference type="GO" id="GO:0009379">
    <property type="term" value="C:Holliday junction helicase complex"/>
    <property type="evidence" value="ECO:0007669"/>
    <property type="project" value="InterPro"/>
</dbReference>
<dbReference type="GO" id="GO:0048476">
    <property type="term" value="C:Holliday junction resolvase complex"/>
    <property type="evidence" value="ECO:0007669"/>
    <property type="project" value="UniProtKB-UniRule"/>
</dbReference>
<dbReference type="GO" id="GO:0005524">
    <property type="term" value="F:ATP binding"/>
    <property type="evidence" value="ECO:0007669"/>
    <property type="project" value="InterPro"/>
</dbReference>
<dbReference type="GO" id="GO:0000400">
    <property type="term" value="F:four-way junction DNA binding"/>
    <property type="evidence" value="ECO:0007669"/>
    <property type="project" value="UniProtKB-UniRule"/>
</dbReference>
<dbReference type="GO" id="GO:0009378">
    <property type="term" value="F:four-way junction helicase activity"/>
    <property type="evidence" value="ECO:0007669"/>
    <property type="project" value="InterPro"/>
</dbReference>
<dbReference type="GO" id="GO:0006310">
    <property type="term" value="P:DNA recombination"/>
    <property type="evidence" value="ECO:0007669"/>
    <property type="project" value="UniProtKB-UniRule"/>
</dbReference>
<dbReference type="GO" id="GO:0006281">
    <property type="term" value="P:DNA repair"/>
    <property type="evidence" value="ECO:0007669"/>
    <property type="project" value="UniProtKB-UniRule"/>
</dbReference>
<dbReference type="CDD" id="cd14332">
    <property type="entry name" value="UBA_RuvA_C"/>
    <property type="match status" value="1"/>
</dbReference>
<dbReference type="Gene3D" id="1.10.150.20">
    <property type="entry name" value="5' to 3' exonuclease, C-terminal subdomain"/>
    <property type="match status" value="1"/>
</dbReference>
<dbReference type="Gene3D" id="1.10.8.10">
    <property type="entry name" value="DNA helicase RuvA subunit, C-terminal domain"/>
    <property type="match status" value="1"/>
</dbReference>
<dbReference type="Gene3D" id="2.40.50.140">
    <property type="entry name" value="Nucleic acid-binding proteins"/>
    <property type="match status" value="1"/>
</dbReference>
<dbReference type="HAMAP" id="MF_00031">
    <property type="entry name" value="DNA_HJ_migration_RuvA"/>
    <property type="match status" value="1"/>
</dbReference>
<dbReference type="InterPro" id="IPR013849">
    <property type="entry name" value="DNA_helicase_Holl-junc_RuvA_I"/>
</dbReference>
<dbReference type="InterPro" id="IPR003583">
    <property type="entry name" value="Hlx-hairpin-Hlx_DNA-bd_motif"/>
</dbReference>
<dbReference type="InterPro" id="IPR012340">
    <property type="entry name" value="NA-bd_OB-fold"/>
</dbReference>
<dbReference type="InterPro" id="IPR000085">
    <property type="entry name" value="RuvA"/>
</dbReference>
<dbReference type="InterPro" id="IPR010994">
    <property type="entry name" value="RuvA_2-like"/>
</dbReference>
<dbReference type="InterPro" id="IPR011114">
    <property type="entry name" value="RuvA_C"/>
</dbReference>
<dbReference type="InterPro" id="IPR036267">
    <property type="entry name" value="RuvA_C_sf"/>
</dbReference>
<dbReference type="NCBIfam" id="TIGR00084">
    <property type="entry name" value="ruvA"/>
    <property type="match status" value="1"/>
</dbReference>
<dbReference type="Pfam" id="PF14520">
    <property type="entry name" value="HHH_5"/>
    <property type="match status" value="1"/>
</dbReference>
<dbReference type="Pfam" id="PF07499">
    <property type="entry name" value="RuvA_C"/>
    <property type="match status" value="1"/>
</dbReference>
<dbReference type="Pfam" id="PF01330">
    <property type="entry name" value="RuvA_N"/>
    <property type="match status" value="1"/>
</dbReference>
<dbReference type="SMART" id="SM00278">
    <property type="entry name" value="HhH1"/>
    <property type="match status" value="2"/>
</dbReference>
<dbReference type="SUPFAM" id="SSF46929">
    <property type="entry name" value="DNA helicase RuvA subunit, C-terminal domain"/>
    <property type="match status" value="1"/>
</dbReference>
<dbReference type="SUPFAM" id="SSF50249">
    <property type="entry name" value="Nucleic acid-binding proteins"/>
    <property type="match status" value="1"/>
</dbReference>
<dbReference type="SUPFAM" id="SSF47781">
    <property type="entry name" value="RuvA domain 2-like"/>
    <property type="match status" value="1"/>
</dbReference>
<proteinExistence type="inferred from homology"/>
<feature type="chain" id="PRO_1000116984" description="Holliday junction branch migration complex subunit RuvA">
    <location>
        <begin position="1"/>
        <end position="197"/>
    </location>
</feature>
<feature type="region of interest" description="Domain I" evidence="1">
    <location>
        <begin position="1"/>
        <end position="63"/>
    </location>
</feature>
<feature type="region of interest" description="Domain II" evidence="1">
    <location>
        <begin position="64"/>
        <end position="142"/>
    </location>
</feature>
<feature type="region of interest" description="Flexible linker" evidence="1">
    <location>
        <begin position="143"/>
        <end position="147"/>
    </location>
</feature>
<feature type="region of interest" description="Domain III" evidence="1">
    <location>
        <begin position="148"/>
        <end position="197"/>
    </location>
</feature>
<name>RUVA_STRZP</name>
<reference key="1">
    <citation type="journal article" date="2010" name="Genome Biol.">
        <title>Structure and dynamics of the pan-genome of Streptococcus pneumoniae and closely related species.</title>
        <authorList>
            <person name="Donati C."/>
            <person name="Hiller N.L."/>
            <person name="Tettelin H."/>
            <person name="Muzzi A."/>
            <person name="Croucher N.J."/>
            <person name="Angiuoli S.V."/>
            <person name="Oggioni M."/>
            <person name="Dunning Hotopp J.C."/>
            <person name="Hu F.Z."/>
            <person name="Riley D.R."/>
            <person name="Covacci A."/>
            <person name="Mitchell T.J."/>
            <person name="Bentley S.D."/>
            <person name="Kilian M."/>
            <person name="Ehrlich G.D."/>
            <person name="Rappuoli R."/>
            <person name="Moxon E.R."/>
            <person name="Masignani V."/>
        </authorList>
    </citation>
    <scope>NUCLEOTIDE SEQUENCE [LARGE SCALE GENOMIC DNA]</scope>
    <source>
        <strain>P1031</strain>
    </source>
</reference>
<keyword id="KW-0963">Cytoplasm</keyword>
<keyword id="KW-0227">DNA damage</keyword>
<keyword id="KW-0233">DNA recombination</keyword>
<keyword id="KW-0234">DNA repair</keyword>
<keyword id="KW-0238">DNA-binding</keyword>
<organism>
    <name type="scientific">Streptococcus pneumoniae (strain P1031)</name>
    <dbReference type="NCBI Taxonomy" id="488223"/>
    <lineage>
        <taxon>Bacteria</taxon>
        <taxon>Bacillati</taxon>
        <taxon>Bacillota</taxon>
        <taxon>Bacilli</taxon>
        <taxon>Lactobacillales</taxon>
        <taxon>Streptococcaceae</taxon>
        <taxon>Streptococcus</taxon>
    </lineage>
</organism>
<comment type="function">
    <text evidence="1">The RuvA-RuvB-RuvC complex processes Holliday junction (HJ) DNA during genetic recombination and DNA repair, while the RuvA-RuvB complex plays an important role in the rescue of blocked DNA replication forks via replication fork reversal (RFR). RuvA specifically binds to HJ cruciform DNA, conferring on it an open structure. The RuvB hexamer acts as an ATP-dependent pump, pulling dsDNA into and through the RuvAB complex. HJ branch migration allows RuvC to scan DNA until it finds its consensus sequence, where it cleaves and resolves the cruciform DNA.</text>
</comment>
<comment type="subunit">
    <text evidence="1">Homotetramer. Forms an RuvA(8)-RuvB(12)-Holliday junction (HJ) complex. HJ DNA is sandwiched between 2 RuvA tetramers; dsDNA enters through RuvA and exits via RuvB. An RuvB hexamer assembles on each DNA strand where it exits the tetramer. Each RuvB hexamer is contacted by two RuvA subunits (via domain III) on 2 adjacent RuvB subunits; this complex drives branch migration. In the full resolvosome a probable DNA-RuvA(4)-RuvB(12)-RuvC(2) complex forms which resolves the HJ.</text>
</comment>
<comment type="subcellular location">
    <subcellularLocation>
        <location evidence="1">Cytoplasm</location>
    </subcellularLocation>
</comment>
<comment type="domain">
    <text evidence="1">Has three domains with a flexible linker between the domains II and III and assumes an 'L' shape. Domain III is highly mobile and contacts RuvB.</text>
</comment>
<comment type="similarity">
    <text evidence="1">Belongs to the RuvA family.</text>
</comment>
<evidence type="ECO:0000255" key="1">
    <source>
        <dbReference type="HAMAP-Rule" id="MF_00031"/>
    </source>
</evidence>
<accession>C1CI73</accession>
<sequence>MYAYLKGIITKITAKYIVLETNGIGYILHVANPYAYSGQVNQEDQIYVHQVVREDAHLLYGFRSEDEKKLFLSLISVSGIGPVSALAIIAADDNAGLVQAIETKNITYLTKFPKIGKKTAQQMVLDLEGKVVVAGDDLPAKVAVQASAENQELEEAMEAMLALGYKATELKKIKKFFEGTTDTAENYIKSALKMLVK</sequence>
<gene>
    <name evidence="1" type="primary">ruvA</name>
    <name type="ordered locus">SPP_0236</name>
</gene>